<gene>
    <name evidence="1" type="primary">rplY</name>
    <name evidence="1" type="synonym">ctc</name>
    <name type="ordered locus">Rmag_1067</name>
</gene>
<sequence length="222" mass="24669">MSLTINALTRDDQGKGASHRLRRNHKIPAIVYGTGKAPRNITLDVFEITRLLENEESYTSVLDLIVDKKKEAVIIKDLQRHPAKNIVTHVDFLRINLKQAIVTSVPLHFNGEENNEAMRLGAILNQFVTSVEVSCLPTDLPHAIDVDISNLTMGEHISFTGLNIPKGVVITALTHGDIETHNRSVVAIQEPRKIAEIEEETSIIVEDENIESNNADKNKSNS</sequence>
<keyword id="KW-0687">Ribonucleoprotein</keyword>
<keyword id="KW-0689">Ribosomal protein</keyword>
<keyword id="KW-0694">RNA-binding</keyword>
<keyword id="KW-0699">rRNA-binding</keyword>
<evidence type="ECO:0000255" key="1">
    <source>
        <dbReference type="HAMAP-Rule" id="MF_01334"/>
    </source>
</evidence>
<evidence type="ECO:0000305" key="2"/>
<proteinExistence type="inferred from homology"/>
<accession>A1AXW4</accession>
<comment type="function">
    <text evidence="1">This is one of the proteins that binds to the 5S RNA in the ribosome where it forms part of the central protuberance.</text>
</comment>
<comment type="subunit">
    <text evidence="1">Part of the 50S ribosomal subunit; part of the 5S rRNA/L5/L18/L25 subcomplex. Contacts the 5S rRNA. Binds to the 5S rRNA independently of L5 and L18.</text>
</comment>
<comment type="similarity">
    <text evidence="1">Belongs to the bacterial ribosomal protein bL25 family. CTC subfamily.</text>
</comment>
<organism>
    <name type="scientific">Ruthia magnifica subsp. Calyptogena magnifica</name>
    <dbReference type="NCBI Taxonomy" id="413404"/>
    <lineage>
        <taxon>Bacteria</taxon>
        <taxon>Pseudomonadati</taxon>
        <taxon>Pseudomonadota</taxon>
        <taxon>Gammaproteobacteria</taxon>
        <taxon>Candidatus Pseudothioglobaceae</taxon>
        <taxon>Candidatus Ruthturnera</taxon>
    </lineage>
</organism>
<feature type="chain" id="PRO_1000052935" description="Large ribosomal subunit protein bL25">
    <location>
        <begin position="1"/>
        <end position="222"/>
    </location>
</feature>
<reference key="1">
    <citation type="journal article" date="2007" name="Science">
        <title>The Calyptogena magnifica chemoautotrophic symbiont genome.</title>
        <authorList>
            <person name="Newton I.L.G."/>
            <person name="Woyke T."/>
            <person name="Auchtung T.A."/>
            <person name="Dilly G.F."/>
            <person name="Dutton R.J."/>
            <person name="Fisher M.C."/>
            <person name="Fontanez K.M."/>
            <person name="Lau E."/>
            <person name="Stewart F.J."/>
            <person name="Richardson P.M."/>
            <person name="Barry K.W."/>
            <person name="Saunders E."/>
            <person name="Detter J.C."/>
            <person name="Wu D."/>
            <person name="Eisen J.A."/>
            <person name="Cavanaugh C.M."/>
        </authorList>
    </citation>
    <scope>NUCLEOTIDE SEQUENCE [LARGE SCALE GENOMIC DNA]</scope>
</reference>
<protein>
    <recommendedName>
        <fullName evidence="1">Large ribosomal subunit protein bL25</fullName>
    </recommendedName>
    <alternativeName>
        <fullName evidence="2">50S ribosomal protein L25</fullName>
    </alternativeName>
    <alternativeName>
        <fullName evidence="1">General stress protein CTC</fullName>
    </alternativeName>
</protein>
<name>RL25_RUTMC</name>
<dbReference type="EMBL" id="CP000488">
    <property type="protein sequence ID" value="ABL02771.1"/>
    <property type="molecule type" value="Genomic_DNA"/>
</dbReference>
<dbReference type="RefSeq" id="WP_011738396.1">
    <property type="nucleotide sequence ID" value="NC_008610.1"/>
</dbReference>
<dbReference type="SMR" id="A1AXW4"/>
<dbReference type="STRING" id="413404.Rmag_1067"/>
<dbReference type="KEGG" id="rma:Rmag_1067"/>
<dbReference type="eggNOG" id="COG1825">
    <property type="taxonomic scope" value="Bacteria"/>
</dbReference>
<dbReference type="HOGENOM" id="CLU_075939_0_1_6"/>
<dbReference type="OrthoDB" id="9806411at2"/>
<dbReference type="Proteomes" id="UP000002587">
    <property type="component" value="Chromosome"/>
</dbReference>
<dbReference type="GO" id="GO:0022625">
    <property type="term" value="C:cytosolic large ribosomal subunit"/>
    <property type="evidence" value="ECO:0007669"/>
    <property type="project" value="TreeGrafter"/>
</dbReference>
<dbReference type="GO" id="GO:0008097">
    <property type="term" value="F:5S rRNA binding"/>
    <property type="evidence" value="ECO:0007669"/>
    <property type="project" value="InterPro"/>
</dbReference>
<dbReference type="GO" id="GO:0003735">
    <property type="term" value="F:structural constituent of ribosome"/>
    <property type="evidence" value="ECO:0007669"/>
    <property type="project" value="InterPro"/>
</dbReference>
<dbReference type="GO" id="GO:0006412">
    <property type="term" value="P:translation"/>
    <property type="evidence" value="ECO:0007669"/>
    <property type="project" value="UniProtKB-UniRule"/>
</dbReference>
<dbReference type="CDD" id="cd00495">
    <property type="entry name" value="Ribosomal_L25_TL5_CTC"/>
    <property type="match status" value="1"/>
</dbReference>
<dbReference type="Gene3D" id="2.170.120.20">
    <property type="entry name" value="Ribosomal protein L25, beta domain"/>
    <property type="match status" value="1"/>
</dbReference>
<dbReference type="Gene3D" id="2.40.240.10">
    <property type="entry name" value="Ribosomal Protein L25, Chain P"/>
    <property type="match status" value="1"/>
</dbReference>
<dbReference type="HAMAP" id="MF_01336">
    <property type="entry name" value="Ribosomal_bL25"/>
    <property type="match status" value="1"/>
</dbReference>
<dbReference type="HAMAP" id="MF_01334">
    <property type="entry name" value="Ribosomal_bL25_CTC"/>
    <property type="match status" value="1"/>
</dbReference>
<dbReference type="InterPro" id="IPR020056">
    <property type="entry name" value="Rbsml_bL25/Gln-tRNA_synth_N"/>
</dbReference>
<dbReference type="InterPro" id="IPR011035">
    <property type="entry name" value="Ribosomal_bL25/Gln-tRNA_synth"/>
</dbReference>
<dbReference type="InterPro" id="IPR020057">
    <property type="entry name" value="Ribosomal_bL25_b-dom"/>
</dbReference>
<dbReference type="InterPro" id="IPR037121">
    <property type="entry name" value="Ribosomal_bL25_C"/>
</dbReference>
<dbReference type="InterPro" id="IPR001021">
    <property type="entry name" value="Ribosomal_bL25_long"/>
</dbReference>
<dbReference type="InterPro" id="IPR020055">
    <property type="entry name" value="Ribosomal_bL25_short"/>
</dbReference>
<dbReference type="InterPro" id="IPR029751">
    <property type="entry name" value="Ribosomal_L25_dom"/>
</dbReference>
<dbReference type="InterPro" id="IPR020930">
    <property type="entry name" value="Ribosomal_uL5_bac-type"/>
</dbReference>
<dbReference type="NCBIfam" id="TIGR00731">
    <property type="entry name" value="bL25_bact_ctc"/>
    <property type="match status" value="1"/>
</dbReference>
<dbReference type="NCBIfam" id="NF004130">
    <property type="entry name" value="PRK05618.1-5"/>
    <property type="match status" value="1"/>
</dbReference>
<dbReference type="NCBIfam" id="NF004612">
    <property type="entry name" value="PRK05943.1"/>
    <property type="match status" value="1"/>
</dbReference>
<dbReference type="PANTHER" id="PTHR33284">
    <property type="entry name" value="RIBOSOMAL PROTEIN L25/GLN-TRNA SYNTHETASE, ANTI-CODON-BINDING DOMAIN-CONTAINING PROTEIN"/>
    <property type="match status" value="1"/>
</dbReference>
<dbReference type="PANTHER" id="PTHR33284:SF1">
    <property type="entry name" value="RIBOSOMAL PROTEIN L25_GLN-TRNA SYNTHETASE, ANTI-CODON-BINDING DOMAIN-CONTAINING PROTEIN"/>
    <property type="match status" value="1"/>
</dbReference>
<dbReference type="Pfam" id="PF01386">
    <property type="entry name" value="Ribosomal_L25p"/>
    <property type="match status" value="1"/>
</dbReference>
<dbReference type="Pfam" id="PF14693">
    <property type="entry name" value="Ribosomal_TL5_C"/>
    <property type="match status" value="1"/>
</dbReference>
<dbReference type="SUPFAM" id="SSF50715">
    <property type="entry name" value="Ribosomal protein L25-like"/>
    <property type="match status" value="1"/>
</dbReference>